<proteinExistence type="inferred from homology"/>
<protein>
    <recommendedName>
        <fullName evidence="1">ATP-dependent helicase/nuclease subunit A</fullName>
        <ecNumber evidence="1">3.1.-.-</ecNumber>
        <ecNumber evidence="1">5.6.2.4</ecNumber>
    </recommendedName>
    <alternativeName>
        <fullName evidence="1">ATP-dependent helicase/nuclease AddA</fullName>
    </alternativeName>
    <alternativeName>
        <fullName evidence="1">DNA 3'-5' helicase AddA</fullName>
    </alternativeName>
</protein>
<gene>
    <name evidence="1" type="primary">addA</name>
    <name type="ordered locus">Sca_0575</name>
</gene>
<sequence length="1220" mass="142644">MIPEKPNDVIWTDDQWKSIYAKGQDTLVAAAAGSGKTAVLVERIIQRILRDEIDVDRLLVVTFTNLSAREMKHRVEKRIQKASLEDPSNTHLKNQRVKIHQAQISTLHSFCLKLIQQHYDVLDIDPNFRTSSEAENILLLEQTIDEVLEKYYAELNPAFIDLSEQLSSDRSDERLRQIIKSVYYFAVANPQPEQWLKSLVSPYKDNQAQDEFLELLMNLAKVFMNTALENLNKSFDLYSELAGCDKQLEVIEDERAFIARAMEGGILNTELISKHSFISRFPSATKKIKEANDGNLELLESAKAYYDDYKGAVEKVQQDYFSRSAEDLKADMAKLAPRVEVLSQITRDVIDTFSKKKRSRNILDFSDYEHFALKILMNEDGTPTDLAKHYRNGFDEILVDEYQDTNRVQEQILSCIKRGDETDGNLFMVGDVKQSIYKFRQADPSLFIEKYSRFSHDGTTGMRIDLSQNFRSRPEVLSTTNYLFKHMMDESVGEIIYDEAAQLYYGAPFDDKPHPLNLNVMVEDKESELTGTEQEAEYIANQVEEIMNHREVYDMGTGSYRKPSYKDIVILERGYNRSRELQQAFKNRDIPFHVNSKEGYFEQTEVRLVLSFLRTVDNPLQDIYLVGLMRSVIYQFTEDELARIRVTSPNDDYFYQSIQHYLKTKEADPDLVAKLQDFLKDLKFYQEFSLEHPVYQLIDRFYNNRLVIQYFSGMIGGKGRRANLYGLYNKAIEFENSSFRGLFQFIRFIDELIDRGKDFGEENVVGPNDDVVRMMTIHASKGLEFPFVIYSGLSKSFNRSDLYKPVILNQKYGMGMTYFDVEKDFAFPSLASVTLRAITEKEMISEEMRLMYVALTRAKEQLFLVGRVKAEKELDKMLNTAISNNMLPMSYRLEVKNPLQLIYAILAKYQANHLTNDLKFERNIDELDDAIHPYAEIHIDEYSDIAQDIHQNEDEEFRTVNDIVNYQSTNTERQQAIETQLDYQYPYQKDVVKPTKQSVSELKRQLETEETGTSYERVRQYQLGASTYERPKFMRQHKKRKANEIGTLMHTVMQHLPFKEERMTSAELDEYIDGLIEKNIIEDDAKPDIRMDEVMNFIKSDLYLEIAQSDQIMREMPFVVNQSKVDHQMNDDEDVSIIQGMIDLIYRKDNQYYFVDYKTDTFNQRRGVSDEELGEQLKARYKIQMYYYRSALETILQKEVKGYLYFFKFGTLSLEETEKH</sequence>
<evidence type="ECO:0000255" key="1">
    <source>
        <dbReference type="HAMAP-Rule" id="MF_01451"/>
    </source>
</evidence>
<organism>
    <name type="scientific">Staphylococcus carnosus (strain TM300)</name>
    <dbReference type="NCBI Taxonomy" id="396513"/>
    <lineage>
        <taxon>Bacteria</taxon>
        <taxon>Bacillati</taxon>
        <taxon>Bacillota</taxon>
        <taxon>Bacilli</taxon>
        <taxon>Bacillales</taxon>
        <taxon>Staphylococcaceae</taxon>
        <taxon>Staphylococcus</taxon>
    </lineage>
</organism>
<keyword id="KW-0067">ATP-binding</keyword>
<keyword id="KW-0227">DNA damage</keyword>
<keyword id="KW-0234">DNA repair</keyword>
<keyword id="KW-0238">DNA-binding</keyword>
<keyword id="KW-0269">Exonuclease</keyword>
<keyword id="KW-0347">Helicase</keyword>
<keyword id="KW-0378">Hydrolase</keyword>
<keyword id="KW-0413">Isomerase</keyword>
<keyword id="KW-0540">Nuclease</keyword>
<keyword id="KW-0547">Nucleotide-binding</keyword>
<keyword id="KW-1185">Reference proteome</keyword>
<reference key="1">
    <citation type="journal article" date="2009" name="Appl. Environ. Microbiol.">
        <title>Genome analysis of the meat starter culture bacterium Staphylococcus carnosus TM300.</title>
        <authorList>
            <person name="Rosenstein R."/>
            <person name="Nerz C."/>
            <person name="Biswas L."/>
            <person name="Resch A."/>
            <person name="Raddatz G."/>
            <person name="Schuster S.C."/>
            <person name="Goetz F."/>
        </authorList>
    </citation>
    <scope>NUCLEOTIDE SEQUENCE [LARGE SCALE GENOMIC DNA]</scope>
    <source>
        <strain>TM300</strain>
    </source>
</reference>
<name>ADDA_STACT</name>
<feature type="chain" id="PRO_0000379321" description="ATP-dependent helicase/nuclease subunit A">
    <location>
        <begin position="1"/>
        <end position="1220"/>
    </location>
</feature>
<feature type="domain" description="UvrD-like helicase ATP-binding" evidence="1">
    <location>
        <begin position="9"/>
        <end position="473"/>
    </location>
</feature>
<feature type="domain" description="UvrD-like helicase C-terminal" evidence="1">
    <location>
        <begin position="474"/>
        <end position="782"/>
    </location>
</feature>
<feature type="binding site" evidence="1">
    <location>
        <begin position="30"/>
        <end position="37"/>
    </location>
    <ligand>
        <name>ATP</name>
        <dbReference type="ChEBI" id="CHEBI:30616"/>
    </ligand>
</feature>
<comment type="function">
    <text evidence="1">The heterodimer acts as both an ATP-dependent DNA helicase and an ATP-dependent, dual-direction single-stranded exonuclease. Recognizes the chi site generating a DNA molecule suitable for the initiation of homologous recombination. The AddA nuclease domain is required for chi fragment generation; this subunit has the helicase and 3' -&gt; 5' nuclease activities.</text>
</comment>
<comment type="catalytic activity">
    <reaction evidence="1">
        <text>Couples ATP hydrolysis with the unwinding of duplex DNA by translocating in the 3'-5' direction.</text>
        <dbReference type="EC" id="5.6.2.4"/>
    </reaction>
</comment>
<comment type="catalytic activity">
    <reaction evidence="1">
        <text>ATP + H2O = ADP + phosphate + H(+)</text>
        <dbReference type="Rhea" id="RHEA:13065"/>
        <dbReference type="ChEBI" id="CHEBI:15377"/>
        <dbReference type="ChEBI" id="CHEBI:15378"/>
        <dbReference type="ChEBI" id="CHEBI:30616"/>
        <dbReference type="ChEBI" id="CHEBI:43474"/>
        <dbReference type="ChEBI" id="CHEBI:456216"/>
        <dbReference type="EC" id="5.6.2.4"/>
    </reaction>
</comment>
<comment type="cofactor">
    <cofactor evidence="1">
        <name>Mg(2+)</name>
        <dbReference type="ChEBI" id="CHEBI:18420"/>
    </cofactor>
</comment>
<comment type="subunit">
    <text evidence="1">Heterodimer of AddA and AddB/RexB.</text>
</comment>
<comment type="similarity">
    <text evidence="1">Belongs to the helicase family. AddA subfamily.</text>
</comment>
<accession>B9DIS2</accession>
<dbReference type="EC" id="3.1.-.-" evidence="1"/>
<dbReference type="EC" id="5.6.2.4" evidence="1"/>
<dbReference type="EMBL" id="AM295250">
    <property type="protein sequence ID" value="CAL27489.1"/>
    <property type="molecule type" value="Genomic_DNA"/>
</dbReference>
<dbReference type="RefSeq" id="WP_015899833.1">
    <property type="nucleotide sequence ID" value="NC_012121.1"/>
</dbReference>
<dbReference type="SMR" id="B9DIS2"/>
<dbReference type="GeneID" id="93795514"/>
<dbReference type="KEGG" id="sca:SCA_0575"/>
<dbReference type="eggNOG" id="COG1074">
    <property type="taxonomic scope" value="Bacteria"/>
</dbReference>
<dbReference type="HOGENOM" id="CLU_001114_3_1_9"/>
<dbReference type="OrthoDB" id="9810135at2"/>
<dbReference type="BioCyc" id="SCAR396513:SCA_RS02940-MONOMER"/>
<dbReference type="Proteomes" id="UP000000444">
    <property type="component" value="Chromosome"/>
</dbReference>
<dbReference type="GO" id="GO:0005829">
    <property type="term" value="C:cytosol"/>
    <property type="evidence" value="ECO:0007669"/>
    <property type="project" value="TreeGrafter"/>
</dbReference>
<dbReference type="GO" id="GO:0033202">
    <property type="term" value="C:DNA helicase complex"/>
    <property type="evidence" value="ECO:0007669"/>
    <property type="project" value="TreeGrafter"/>
</dbReference>
<dbReference type="GO" id="GO:0043138">
    <property type="term" value="F:3'-5' DNA helicase activity"/>
    <property type="evidence" value="ECO:0007669"/>
    <property type="project" value="UniProtKB-UniRule"/>
</dbReference>
<dbReference type="GO" id="GO:0008408">
    <property type="term" value="F:3'-5' exonuclease activity"/>
    <property type="evidence" value="ECO:0007669"/>
    <property type="project" value="UniProtKB-UniRule"/>
</dbReference>
<dbReference type="GO" id="GO:0005524">
    <property type="term" value="F:ATP binding"/>
    <property type="evidence" value="ECO:0007669"/>
    <property type="project" value="UniProtKB-UniRule"/>
</dbReference>
<dbReference type="GO" id="GO:0016887">
    <property type="term" value="F:ATP hydrolysis activity"/>
    <property type="evidence" value="ECO:0007669"/>
    <property type="project" value="RHEA"/>
</dbReference>
<dbReference type="GO" id="GO:0003690">
    <property type="term" value="F:double-stranded DNA binding"/>
    <property type="evidence" value="ECO:0007669"/>
    <property type="project" value="UniProtKB-UniRule"/>
</dbReference>
<dbReference type="GO" id="GO:0000724">
    <property type="term" value="P:double-strand break repair via homologous recombination"/>
    <property type="evidence" value="ECO:0007669"/>
    <property type="project" value="UniProtKB-UniRule"/>
</dbReference>
<dbReference type="CDD" id="cd17932">
    <property type="entry name" value="DEXQc_UvrD"/>
    <property type="match status" value="1"/>
</dbReference>
<dbReference type="FunFam" id="3.40.50.300:FF:001196">
    <property type="entry name" value="ATP-dependent helicase/nuclease subunit A"/>
    <property type="match status" value="1"/>
</dbReference>
<dbReference type="FunFam" id="3.40.50.300:FF:001236">
    <property type="entry name" value="ATP-dependent helicase/nuclease subunit A"/>
    <property type="match status" value="1"/>
</dbReference>
<dbReference type="Gene3D" id="3.90.320.10">
    <property type="match status" value="1"/>
</dbReference>
<dbReference type="Gene3D" id="3.40.50.300">
    <property type="entry name" value="P-loop containing nucleotide triphosphate hydrolases"/>
    <property type="match status" value="4"/>
</dbReference>
<dbReference type="Gene3D" id="1.10.486.10">
    <property type="entry name" value="PCRA, domain 4"/>
    <property type="match status" value="1"/>
</dbReference>
<dbReference type="HAMAP" id="MF_01451">
    <property type="entry name" value="AddA"/>
    <property type="match status" value="1"/>
</dbReference>
<dbReference type="InterPro" id="IPR014152">
    <property type="entry name" value="AddA"/>
</dbReference>
<dbReference type="InterPro" id="IPR014017">
    <property type="entry name" value="DNA_helicase_UvrD-like_C"/>
</dbReference>
<dbReference type="InterPro" id="IPR000212">
    <property type="entry name" value="DNA_helicase_UvrD/REP"/>
</dbReference>
<dbReference type="InterPro" id="IPR027417">
    <property type="entry name" value="P-loop_NTPase"/>
</dbReference>
<dbReference type="InterPro" id="IPR011604">
    <property type="entry name" value="PDDEXK-like_dom_sf"/>
</dbReference>
<dbReference type="InterPro" id="IPR038726">
    <property type="entry name" value="PDDEXK_AddAB-type"/>
</dbReference>
<dbReference type="InterPro" id="IPR011335">
    <property type="entry name" value="Restrct_endonuc-II-like"/>
</dbReference>
<dbReference type="InterPro" id="IPR014016">
    <property type="entry name" value="UvrD-like_ATP-bd"/>
</dbReference>
<dbReference type="NCBIfam" id="TIGR02785">
    <property type="entry name" value="addA_Gpos"/>
    <property type="match status" value="1"/>
</dbReference>
<dbReference type="PANTHER" id="PTHR11070:SF48">
    <property type="entry name" value="ATP-DEPENDENT HELICASE_NUCLEASE SUBUNIT A"/>
    <property type="match status" value="1"/>
</dbReference>
<dbReference type="PANTHER" id="PTHR11070">
    <property type="entry name" value="UVRD / RECB / PCRA DNA HELICASE FAMILY MEMBER"/>
    <property type="match status" value="1"/>
</dbReference>
<dbReference type="Pfam" id="PF12705">
    <property type="entry name" value="PDDEXK_1"/>
    <property type="match status" value="1"/>
</dbReference>
<dbReference type="Pfam" id="PF00580">
    <property type="entry name" value="UvrD-helicase"/>
    <property type="match status" value="1"/>
</dbReference>
<dbReference type="Pfam" id="PF13361">
    <property type="entry name" value="UvrD_C"/>
    <property type="match status" value="1"/>
</dbReference>
<dbReference type="SUPFAM" id="SSF52540">
    <property type="entry name" value="P-loop containing nucleoside triphosphate hydrolases"/>
    <property type="match status" value="1"/>
</dbReference>
<dbReference type="SUPFAM" id="SSF52980">
    <property type="entry name" value="Restriction endonuclease-like"/>
    <property type="match status" value="1"/>
</dbReference>
<dbReference type="PROSITE" id="PS51198">
    <property type="entry name" value="UVRD_HELICASE_ATP_BIND"/>
    <property type="match status" value="1"/>
</dbReference>
<dbReference type="PROSITE" id="PS51217">
    <property type="entry name" value="UVRD_HELICASE_CTER"/>
    <property type="match status" value="1"/>
</dbReference>